<name>ACDH_ECO7I</name>
<feature type="chain" id="PRO_1000187031" description="Acetaldehyde dehydrogenase">
    <location>
        <begin position="1"/>
        <end position="316"/>
    </location>
</feature>
<feature type="active site" description="Acyl-thioester intermediate" evidence="1">
    <location>
        <position position="131"/>
    </location>
</feature>
<feature type="binding site" evidence="1">
    <location>
        <begin position="11"/>
        <end position="14"/>
    </location>
    <ligand>
        <name>NAD(+)</name>
        <dbReference type="ChEBI" id="CHEBI:57540"/>
    </ligand>
</feature>
<feature type="binding site" evidence="1">
    <location>
        <begin position="162"/>
        <end position="170"/>
    </location>
    <ligand>
        <name>NAD(+)</name>
        <dbReference type="ChEBI" id="CHEBI:57540"/>
    </ligand>
</feature>
<feature type="binding site" evidence="1">
    <location>
        <position position="289"/>
    </location>
    <ligand>
        <name>NAD(+)</name>
        <dbReference type="ChEBI" id="CHEBI:57540"/>
    </ligand>
</feature>
<accession>B7NK04</accession>
<sequence length="316" mass="33501">MSKRKVAIIGSGNIGTDLMIKILRHGQHLEMAVMVGIDPQSDGLARARRMGVATTHEGVIGLMNMPEFADIDIVFDATSAGAHVKNDAALREAKPDIRLIDLTPAAIGPYCVPVVNLEENVDQLNVNMVTCGGQATIPMVAAVSRVARVHYAEIIASIASKSAGPGTRANIDEFTETTSRAIEVVGGAAKGKAIIVLNPAEPPLMMRDTVYVLSDEASQDDIEASINEMAEAVQAYVPGYRLKQRVQFEVIPQDKPVNLPGVGQFSGLKTAVWLEVEGAAHYLPAYAGNLDIMTSSALATAEKMAQSLARKAGEAA</sequence>
<organism>
    <name type="scientific">Escherichia coli O7:K1 (strain IAI39 / ExPEC)</name>
    <dbReference type="NCBI Taxonomy" id="585057"/>
    <lineage>
        <taxon>Bacteria</taxon>
        <taxon>Pseudomonadati</taxon>
        <taxon>Pseudomonadota</taxon>
        <taxon>Gammaproteobacteria</taxon>
        <taxon>Enterobacterales</taxon>
        <taxon>Enterobacteriaceae</taxon>
        <taxon>Escherichia</taxon>
    </lineage>
</organism>
<protein>
    <recommendedName>
        <fullName evidence="1">Acetaldehyde dehydrogenase</fullName>
        <ecNumber evidence="1">1.2.1.10</ecNumber>
    </recommendedName>
    <alternativeName>
        <fullName evidence="1">Acetaldehyde dehydrogenase [acetylating]</fullName>
    </alternativeName>
</protein>
<keyword id="KW-0058">Aromatic hydrocarbons catabolism</keyword>
<keyword id="KW-0520">NAD</keyword>
<keyword id="KW-0560">Oxidoreductase</keyword>
<evidence type="ECO:0000255" key="1">
    <source>
        <dbReference type="HAMAP-Rule" id="MF_01657"/>
    </source>
</evidence>
<dbReference type="EC" id="1.2.1.10" evidence="1"/>
<dbReference type="EMBL" id="CU928164">
    <property type="protein sequence ID" value="CAR16467.1"/>
    <property type="molecule type" value="Genomic_DNA"/>
</dbReference>
<dbReference type="RefSeq" id="WP_000044321.1">
    <property type="nucleotide sequence ID" value="NC_011750.1"/>
</dbReference>
<dbReference type="RefSeq" id="YP_002406369.1">
    <property type="nucleotide sequence ID" value="NC_011750.1"/>
</dbReference>
<dbReference type="SMR" id="B7NK04"/>
<dbReference type="STRING" id="585057.ECIAI39_0327"/>
<dbReference type="KEGG" id="ect:ECIAI39_0327"/>
<dbReference type="PATRIC" id="fig|585057.6.peg.354"/>
<dbReference type="HOGENOM" id="CLU_062208_0_0_6"/>
<dbReference type="UniPathway" id="UPA00714"/>
<dbReference type="Proteomes" id="UP000000749">
    <property type="component" value="Chromosome"/>
</dbReference>
<dbReference type="GO" id="GO:0008774">
    <property type="term" value="F:acetaldehyde dehydrogenase (acetylating) activity"/>
    <property type="evidence" value="ECO:0007669"/>
    <property type="project" value="UniProtKB-UniRule"/>
</dbReference>
<dbReference type="GO" id="GO:0051287">
    <property type="term" value="F:NAD binding"/>
    <property type="evidence" value="ECO:0007669"/>
    <property type="project" value="UniProtKB-UniRule"/>
</dbReference>
<dbReference type="GO" id="GO:0019380">
    <property type="term" value="P:3-phenylpropionate catabolic process"/>
    <property type="evidence" value="ECO:0007669"/>
    <property type="project" value="UniProtKB-UniRule"/>
</dbReference>
<dbReference type="CDD" id="cd23933">
    <property type="entry name" value="ALDH_C"/>
    <property type="match status" value="1"/>
</dbReference>
<dbReference type="FunFam" id="3.30.360.10:FF:000021">
    <property type="entry name" value="Acetaldehyde dehydrogenase"/>
    <property type="match status" value="1"/>
</dbReference>
<dbReference type="Gene3D" id="3.30.360.10">
    <property type="entry name" value="Dihydrodipicolinate Reductase, domain 2"/>
    <property type="match status" value="1"/>
</dbReference>
<dbReference type="Gene3D" id="3.40.50.720">
    <property type="entry name" value="NAD(P)-binding Rossmann-like Domain"/>
    <property type="match status" value="1"/>
</dbReference>
<dbReference type="HAMAP" id="MF_01657">
    <property type="entry name" value="Ac_ald_DH_ac"/>
    <property type="match status" value="1"/>
</dbReference>
<dbReference type="InterPro" id="IPR003361">
    <property type="entry name" value="Acetaldehyde_dehydrogenase"/>
</dbReference>
<dbReference type="InterPro" id="IPR015426">
    <property type="entry name" value="Acetylaldehyde_DH_C"/>
</dbReference>
<dbReference type="InterPro" id="IPR036291">
    <property type="entry name" value="NAD(P)-bd_dom_sf"/>
</dbReference>
<dbReference type="InterPro" id="IPR000534">
    <property type="entry name" value="Semialdehyde_DH_NAD-bd"/>
</dbReference>
<dbReference type="NCBIfam" id="TIGR03215">
    <property type="entry name" value="ac_ald_DH_ac"/>
    <property type="match status" value="1"/>
</dbReference>
<dbReference type="NCBIfam" id="NF006157">
    <property type="entry name" value="PRK08300.1"/>
    <property type="match status" value="1"/>
</dbReference>
<dbReference type="Pfam" id="PF09290">
    <property type="entry name" value="AcetDehyd-dimer"/>
    <property type="match status" value="1"/>
</dbReference>
<dbReference type="Pfam" id="PF01118">
    <property type="entry name" value="Semialdhyde_dh"/>
    <property type="match status" value="1"/>
</dbReference>
<dbReference type="PIRSF" id="PIRSF015689">
    <property type="entry name" value="Actaldh_dh_actl"/>
    <property type="match status" value="1"/>
</dbReference>
<dbReference type="SMART" id="SM00859">
    <property type="entry name" value="Semialdhyde_dh"/>
    <property type="match status" value="1"/>
</dbReference>
<dbReference type="SUPFAM" id="SSF55347">
    <property type="entry name" value="Glyceraldehyde-3-phosphate dehydrogenase-like, C-terminal domain"/>
    <property type="match status" value="1"/>
</dbReference>
<dbReference type="SUPFAM" id="SSF51735">
    <property type="entry name" value="NAD(P)-binding Rossmann-fold domains"/>
    <property type="match status" value="1"/>
</dbReference>
<comment type="function">
    <text evidence="1">Catalyzes the conversion of acetaldehyde to acetyl-CoA, using NAD(+) and coenzyme A. Is the final enzyme in the meta-cleavage pathway for the degradation of aromatic compounds.</text>
</comment>
<comment type="catalytic activity">
    <reaction evidence="1">
        <text>acetaldehyde + NAD(+) + CoA = acetyl-CoA + NADH + H(+)</text>
        <dbReference type="Rhea" id="RHEA:23288"/>
        <dbReference type="ChEBI" id="CHEBI:15343"/>
        <dbReference type="ChEBI" id="CHEBI:15378"/>
        <dbReference type="ChEBI" id="CHEBI:57287"/>
        <dbReference type="ChEBI" id="CHEBI:57288"/>
        <dbReference type="ChEBI" id="CHEBI:57540"/>
        <dbReference type="ChEBI" id="CHEBI:57945"/>
        <dbReference type="EC" id="1.2.1.10"/>
    </reaction>
</comment>
<comment type="pathway">
    <text evidence="1">Aromatic compound metabolism; 3-phenylpropanoate degradation.</text>
</comment>
<comment type="subunit">
    <text evidence="1">Interacts with MhpE.</text>
</comment>
<comment type="similarity">
    <text evidence="1">Belongs to the acetaldehyde dehydrogenase family.</text>
</comment>
<gene>
    <name evidence="1" type="primary">mhpF</name>
    <name type="ordered locus">ECIAI39_0327</name>
</gene>
<reference key="1">
    <citation type="journal article" date="2009" name="PLoS Genet.">
        <title>Organised genome dynamics in the Escherichia coli species results in highly diverse adaptive paths.</title>
        <authorList>
            <person name="Touchon M."/>
            <person name="Hoede C."/>
            <person name="Tenaillon O."/>
            <person name="Barbe V."/>
            <person name="Baeriswyl S."/>
            <person name="Bidet P."/>
            <person name="Bingen E."/>
            <person name="Bonacorsi S."/>
            <person name="Bouchier C."/>
            <person name="Bouvet O."/>
            <person name="Calteau A."/>
            <person name="Chiapello H."/>
            <person name="Clermont O."/>
            <person name="Cruveiller S."/>
            <person name="Danchin A."/>
            <person name="Diard M."/>
            <person name="Dossat C."/>
            <person name="Karoui M.E."/>
            <person name="Frapy E."/>
            <person name="Garry L."/>
            <person name="Ghigo J.M."/>
            <person name="Gilles A.M."/>
            <person name="Johnson J."/>
            <person name="Le Bouguenec C."/>
            <person name="Lescat M."/>
            <person name="Mangenot S."/>
            <person name="Martinez-Jehanne V."/>
            <person name="Matic I."/>
            <person name="Nassif X."/>
            <person name="Oztas S."/>
            <person name="Petit M.A."/>
            <person name="Pichon C."/>
            <person name="Rouy Z."/>
            <person name="Ruf C.S."/>
            <person name="Schneider D."/>
            <person name="Tourret J."/>
            <person name="Vacherie B."/>
            <person name="Vallenet D."/>
            <person name="Medigue C."/>
            <person name="Rocha E.P.C."/>
            <person name="Denamur E."/>
        </authorList>
    </citation>
    <scope>NUCLEOTIDE SEQUENCE [LARGE SCALE GENOMIC DNA]</scope>
    <source>
        <strain>IAI39 / ExPEC</strain>
    </source>
</reference>
<proteinExistence type="inferred from homology"/>